<comment type="function">
    <text evidence="1">The UvrABC repair system catalyzes the recognition and processing of DNA lesions. UvrC both incises the 5' and 3' sides of the lesion. The N-terminal half is responsible for the 3' incision and the C-terminal half is responsible for the 5' incision.</text>
</comment>
<comment type="subunit">
    <text evidence="1">Interacts with UvrB in an incision complex.</text>
</comment>
<comment type="subcellular location">
    <subcellularLocation>
        <location evidence="1">Cytoplasm</location>
    </subcellularLocation>
</comment>
<comment type="similarity">
    <text evidence="1">Belongs to the UvrC family.</text>
</comment>
<reference key="1">
    <citation type="journal article" date="2008" name="BMC Genomics">
        <title>The genome sequence of the fish pathogen Aliivibrio salmonicida strain LFI1238 shows extensive evidence of gene decay.</title>
        <authorList>
            <person name="Hjerde E."/>
            <person name="Lorentzen M.S."/>
            <person name="Holden M.T."/>
            <person name="Seeger K."/>
            <person name="Paulsen S."/>
            <person name="Bason N."/>
            <person name="Churcher C."/>
            <person name="Harris D."/>
            <person name="Norbertczak H."/>
            <person name="Quail M.A."/>
            <person name="Sanders S."/>
            <person name="Thurston S."/>
            <person name="Parkhill J."/>
            <person name="Willassen N.P."/>
            <person name="Thomson N.R."/>
        </authorList>
    </citation>
    <scope>NUCLEOTIDE SEQUENCE [LARGE SCALE GENOMIC DNA]</scope>
    <source>
        <strain>LFI1238</strain>
    </source>
</reference>
<keyword id="KW-0963">Cytoplasm</keyword>
<keyword id="KW-0227">DNA damage</keyword>
<keyword id="KW-0228">DNA excision</keyword>
<keyword id="KW-0234">DNA repair</keyword>
<keyword id="KW-0267">Excision nuclease</keyword>
<keyword id="KW-0742">SOS response</keyword>
<organism>
    <name type="scientific">Aliivibrio salmonicida (strain LFI1238)</name>
    <name type="common">Vibrio salmonicida (strain LFI1238)</name>
    <dbReference type="NCBI Taxonomy" id="316275"/>
    <lineage>
        <taxon>Bacteria</taxon>
        <taxon>Pseudomonadati</taxon>
        <taxon>Pseudomonadota</taxon>
        <taxon>Gammaproteobacteria</taxon>
        <taxon>Vibrionales</taxon>
        <taxon>Vibrionaceae</taxon>
        <taxon>Aliivibrio</taxon>
    </lineage>
</organism>
<name>UVRC_ALISL</name>
<accession>B6EI86</accession>
<evidence type="ECO:0000255" key="1">
    <source>
        <dbReference type="HAMAP-Rule" id="MF_00203"/>
    </source>
</evidence>
<feature type="chain" id="PRO_1000099456" description="UvrABC system protein C">
    <location>
        <begin position="1"/>
        <end position="608"/>
    </location>
</feature>
<feature type="domain" description="GIY-YIG" evidence="1">
    <location>
        <begin position="15"/>
        <end position="93"/>
    </location>
</feature>
<feature type="domain" description="UVR" evidence="1">
    <location>
        <begin position="203"/>
        <end position="238"/>
    </location>
</feature>
<dbReference type="EMBL" id="FM178379">
    <property type="protein sequence ID" value="CAQ79825.1"/>
    <property type="molecule type" value="Genomic_DNA"/>
</dbReference>
<dbReference type="RefSeq" id="WP_012550666.1">
    <property type="nucleotide sequence ID" value="NC_011312.1"/>
</dbReference>
<dbReference type="SMR" id="B6EI86"/>
<dbReference type="KEGG" id="vsa:VSAL_I2140"/>
<dbReference type="eggNOG" id="COG0322">
    <property type="taxonomic scope" value="Bacteria"/>
</dbReference>
<dbReference type="HOGENOM" id="CLU_014841_3_2_6"/>
<dbReference type="Proteomes" id="UP000001730">
    <property type="component" value="Chromosome 1"/>
</dbReference>
<dbReference type="GO" id="GO:0005737">
    <property type="term" value="C:cytoplasm"/>
    <property type="evidence" value="ECO:0007669"/>
    <property type="project" value="UniProtKB-SubCell"/>
</dbReference>
<dbReference type="GO" id="GO:0009380">
    <property type="term" value="C:excinuclease repair complex"/>
    <property type="evidence" value="ECO:0007669"/>
    <property type="project" value="InterPro"/>
</dbReference>
<dbReference type="GO" id="GO:0003677">
    <property type="term" value="F:DNA binding"/>
    <property type="evidence" value="ECO:0007669"/>
    <property type="project" value="UniProtKB-UniRule"/>
</dbReference>
<dbReference type="GO" id="GO:0009381">
    <property type="term" value="F:excinuclease ABC activity"/>
    <property type="evidence" value="ECO:0007669"/>
    <property type="project" value="UniProtKB-UniRule"/>
</dbReference>
<dbReference type="GO" id="GO:0006289">
    <property type="term" value="P:nucleotide-excision repair"/>
    <property type="evidence" value="ECO:0007669"/>
    <property type="project" value="UniProtKB-UniRule"/>
</dbReference>
<dbReference type="GO" id="GO:0009432">
    <property type="term" value="P:SOS response"/>
    <property type="evidence" value="ECO:0007669"/>
    <property type="project" value="UniProtKB-UniRule"/>
</dbReference>
<dbReference type="CDD" id="cd10434">
    <property type="entry name" value="GIY-YIG_UvrC_Cho"/>
    <property type="match status" value="1"/>
</dbReference>
<dbReference type="FunFam" id="1.10.150.20:FF:000005">
    <property type="entry name" value="UvrABC system protein C"/>
    <property type="match status" value="1"/>
</dbReference>
<dbReference type="FunFam" id="3.30.420.340:FF:000001">
    <property type="entry name" value="UvrABC system protein C"/>
    <property type="match status" value="1"/>
</dbReference>
<dbReference type="FunFam" id="3.40.1440.10:FF:000001">
    <property type="entry name" value="UvrABC system protein C"/>
    <property type="match status" value="1"/>
</dbReference>
<dbReference type="Gene3D" id="1.10.150.20">
    <property type="entry name" value="5' to 3' exonuclease, C-terminal subdomain"/>
    <property type="match status" value="1"/>
</dbReference>
<dbReference type="Gene3D" id="3.40.1440.10">
    <property type="entry name" value="GIY-YIG endonuclease"/>
    <property type="match status" value="1"/>
</dbReference>
<dbReference type="Gene3D" id="4.10.860.10">
    <property type="entry name" value="UVR domain"/>
    <property type="match status" value="1"/>
</dbReference>
<dbReference type="Gene3D" id="3.30.420.340">
    <property type="entry name" value="UvrC, RNAse H endonuclease domain"/>
    <property type="match status" value="1"/>
</dbReference>
<dbReference type="HAMAP" id="MF_00203">
    <property type="entry name" value="UvrC"/>
    <property type="match status" value="1"/>
</dbReference>
<dbReference type="InterPro" id="IPR000305">
    <property type="entry name" value="GIY-YIG_endonuc"/>
</dbReference>
<dbReference type="InterPro" id="IPR035901">
    <property type="entry name" value="GIY-YIG_endonuc_sf"/>
</dbReference>
<dbReference type="InterPro" id="IPR047296">
    <property type="entry name" value="GIY-YIG_UvrC_Cho"/>
</dbReference>
<dbReference type="InterPro" id="IPR003583">
    <property type="entry name" value="Hlx-hairpin-Hlx_DNA-bd_motif"/>
</dbReference>
<dbReference type="InterPro" id="IPR010994">
    <property type="entry name" value="RuvA_2-like"/>
</dbReference>
<dbReference type="InterPro" id="IPR001943">
    <property type="entry name" value="UVR_dom"/>
</dbReference>
<dbReference type="InterPro" id="IPR036876">
    <property type="entry name" value="UVR_dom_sf"/>
</dbReference>
<dbReference type="InterPro" id="IPR050066">
    <property type="entry name" value="UvrABC_protein_C"/>
</dbReference>
<dbReference type="InterPro" id="IPR004791">
    <property type="entry name" value="UvrC"/>
</dbReference>
<dbReference type="InterPro" id="IPR001162">
    <property type="entry name" value="UvrC_RNase_H_dom"/>
</dbReference>
<dbReference type="InterPro" id="IPR038476">
    <property type="entry name" value="UvrC_RNase_H_dom_sf"/>
</dbReference>
<dbReference type="NCBIfam" id="NF001824">
    <property type="entry name" value="PRK00558.1-5"/>
    <property type="match status" value="1"/>
</dbReference>
<dbReference type="NCBIfam" id="TIGR00194">
    <property type="entry name" value="uvrC"/>
    <property type="match status" value="1"/>
</dbReference>
<dbReference type="PANTHER" id="PTHR30562:SF1">
    <property type="entry name" value="UVRABC SYSTEM PROTEIN C"/>
    <property type="match status" value="1"/>
</dbReference>
<dbReference type="PANTHER" id="PTHR30562">
    <property type="entry name" value="UVRC/OXIDOREDUCTASE"/>
    <property type="match status" value="1"/>
</dbReference>
<dbReference type="Pfam" id="PF01541">
    <property type="entry name" value="GIY-YIG"/>
    <property type="match status" value="1"/>
</dbReference>
<dbReference type="Pfam" id="PF14520">
    <property type="entry name" value="HHH_5"/>
    <property type="match status" value="1"/>
</dbReference>
<dbReference type="Pfam" id="PF02151">
    <property type="entry name" value="UVR"/>
    <property type="match status" value="1"/>
</dbReference>
<dbReference type="Pfam" id="PF22920">
    <property type="entry name" value="UvrC_RNaseH"/>
    <property type="match status" value="1"/>
</dbReference>
<dbReference type="Pfam" id="PF08459">
    <property type="entry name" value="UvrC_RNaseH_dom"/>
    <property type="match status" value="1"/>
</dbReference>
<dbReference type="SMART" id="SM00465">
    <property type="entry name" value="GIYc"/>
    <property type="match status" value="1"/>
</dbReference>
<dbReference type="SMART" id="SM00278">
    <property type="entry name" value="HhH1"/>
    <property type="match status" value="2"/>
</dbReference>
<dbReference type="SUPFAM" id="SSF46600">
    <property type="entry name" value="C-terminal UvrC-binding domain of UvrB"/>
    <property type="match status" value="1"/>
</dbReference>
<dbReference type="SUPFAM" id="SSF82771">
    <property type="entry name" value="GIY-YIG endonuclease"/>
    <property type="match status" value="1"/>
</dbReference>
<dbReference type="SUPFAM" id="SSF47781">
    <property type="entry name" value="RuvA domain 2-like"/>
    <property type="match status" value="1"/>
</dbReference>
<dbReference type="PROSITE" id="PS50164">
    <property type="entry name" value="GIY_YIG"/>
    <property type="match status" value="1"/>
</dbReference>
<dbReference type="PROSITE" id="PS50151">
    <property type="entry name" value="UVR"/>
    <property type="match status" value="1"/>
</dbReference>
<dbReference type="PROSITE" id="PS50165">
    <property type="entry name" value="UVRC"/>
    <property type="match status" value="1"/>
</dbReference>
<gene>
    <name evidence="1" type="primary">uvrC</name>
    <name type="ordered locus">VSAL_I2140</name>
</gene>
<proteinExistence type="inferred from homology"/>
<sequence length="608" mass="69139">MPPFDSKAFLLSVTHQPGVYRMYNAEAEVIYVGKAKDLKKRLSSYFRSNIPSEKTKALVTHIAQIDVTVTHTETEALILEHNYIKQYLPKYNVLLRDDKSYPYIFISNHKHPRISIHRGTKRKKGEYFGPYPDSGAVRDSLHLIQKLFPIRQCEDSVYANRHRPCLMHQIGRCLAPCVKGIISDEDYAEQTEFIRLFLQGKDRQVIQSLVEQMEGASQALNFEKAATIRDQIQSMRRVQEQQYVSDESSDDLDVLGFTIENGLACIHLLMIRHGKILGSRSFFPKIPAKTEKEEVFSSFLTQYYLNHSQGRTIPNRVITSFEFESEGLEQALTELSGRKVLFQLNPKGMKGRYLKLADTNALSALTSKANHKLTVYQRFKQLEEALSLASIQRMECFDISHTMGEKTVASCVVFNQEGPVKSEYRRYNITGITGGDDYAAMAQVLERRYSKQLDIDKIPDIVFIDGGKGQLNRAYDVIRQHWGDWPKRPLLLGIAKGVTRKHGLETLVKITGEEFSMPSDSPALHLIQHIRDESHNHAISGHRAQRAKVRKTSTLQHIEGVGPKRRQALLQYLGGLQELKKASVEEISKVPGISRSLAEKIQDALKQG</sequence>
<protein>
    <recommendedName>
        <fullName evidence="1">UvrABC system protein C</fullName>
        <shortName evidence="1">Protein UvrC</shortName>
    </recommendedName>
    <alternativeName>
        <fullName evidence="1">Excinuclease ABC subunit C</fullName>
    </alternativeName>
</protein>